<sequence>MVPPVWTLLLLVGAALFRKEKPPDQKLVVRSSRDNYVLTQCDFEDDAKPLCDWSQVSADDEDWVRASGPSPTGSTGAPGGYPNGEGSYLHMESNSFHRGGVARLLSPDLWEQGPLCVHFAHHMFGLSWGAQLRLLLLSGEEGRRPDVLWKHWNTQRPSWMLTTVTVPAGFTLPTRLMFEGTRGSTAYLDIALDALSIRRGSCNRVCMMQTCSFDIPNDLCDWTWIPTASGAKWTQKKGSSGKPGVGPDGDFSSPGSGCYMLLDPKNARPGQKAVLLSPVSLSSGCLSFSFHYILRGQSPGAALHIYASVLGSIRKHTLFSGQPGPNWQAVSVNYTAVGRIQFAVVGVFGKTPEPAVAVDATSIAPCGEGFPQCDFEDNAHPFCDWVQTSGDGGHWALGHKNGPVHGMGPAGGFPNAGGHYIYLEADEFSQAGQSVRLVSRPFCAPGDICVEFAYHMYGLGEGTMLELLLGSPAGSPPIPLWKRVGSQRPYWQNTSVTVPSGHQQPMQLIFKGIQGSNTASVVAMGFILINPGTCPVKVLPELPPVSPVSSTGPSETTGLTENPTISTKKPTVSIEKPSVTTEKPTVPKEKPTIPTEKPTISTEKPTIPSEKPNMPSEKPTIPSEKPTILTEKPTIPSEKPTIPSEKPTISTEKPTVPTEEPTTPTEETTTSMEEPVIPTEKPSIPTEKPSIPTEKPTISMEETIISTEKPTISPEKPTIPTEKPTIPTEKSTISPEKPTTPTEKPTIPTEKPTISPEKPTTPTEKPTISPEKLTIPTEKPTIPTEKPTIPTEKPTISTEEPTTPTEETTISTEKPSIPMEKPTLPTEETTTSVEETTISTEKLTIPMEKPTISTEKPTIPTEKPTISPEKLTIPTEKLTIPTEKPTIPIEETTISTEKLTIPTEKPTISPEKPTISTEKPTIPTEKPTIPTEETTISTEKLTIPTEKPTISPEKLTIPTEKPTISTEKPTIPTEKLTIPTEKPTIPTEKPTIPTEKLTALRPPHPSPTATGLAALVMSPHAPSTPMTSVILGTTTTSRSSTERCPPNARYESCACPASCKSPRPSCGPLCREGCVCNPGFLFSDNHCIQASSCNCFYNNDYYEPGAEWFSPNCTEHCRCWPGSRVECQISQCGTHTVCQLKNGQYGCHPYAGTATCLVYGDPHYVTFDGRHFGFMGKCTYILAQPCGNSTDPFFRVTAKNEEQGQEGVSCLSKVYVTLPESTVTLLKGRRTLVGGQQVTLPAIPSKGVFLGASGRFVELQTEFGLRVRWDGDQQLYVTVSSTYSGKLCGLCGNYDGNSDNDHLKLDGSPAGDKEELGNSWQTDQDEDQECQKYQVVNSPSCDSSLQSSMSGPGFCGRLVDTHGPFETCLLHVKAASFFDSCMLDMCGFQGLQHLLCTHMSTMTTTCQDAGHAVKPWREPHFCPMACPPNSKYSLCAKPCPDTCHSGFSGMFCSDRCVEACECNPGFVLSGLECIPRSQCGCLHPAGSYFKVGERWYKPGCKELCVCESNNRIRCQPWRCRAQEFCGQQDGIYGCHAQGAATCTASGDPHYLTFDGALHHFMGTCTYVLTRPCWSRSQDSYFVVSATNENRGGILEVSYIKAVHVTVFDLSISLLRGCKVMLNGHRVALPVWLAQGRVTIRLSSNLVLLYTNFGLQVRYDGSHLVEVTVPSSYGGQLCGLCGNYNNNSLDDNLRPDRKLAGDSMQLGAAWKLPESSEPGCFLVGGKPSSCQENSMADAWNKNCAILINPQGPFSQCHQVVPPQSSFASCVHGQCGTKGDTTALCRSLQAYASLCAQAGQAPAWRNRTFCPMRCPPGSSYSPCSSPCPDTCSSINNPRDCPKALPCAESCECQKGHILSGTSCVPLGQCGCTDPAGSYHPVGERWYTENTCTRLCTCSVHNNITCFQSTCKPNQICWALDGLLHCRASGVGVCQLPGESHYVSFDGSNHSIPDACTLVLVKVCHPAMALPFFKISAKHEKEEGGTEAFRLHEVYIDIYDAQVTLQKGHRVLINSKQVTLPAISQIPGVSVKSSSIYSIVNIKIGVQVKFDGNHLLEIEIPTTYYGKVCGMCGNFNDEEEDELMMPSDEVANSDSEFVNSWKDKDIDPSCQSLLVDEQQIPAEQQENPSGNCRAADLRRAREKCEAALRAPVWAQCASRIDLTPFLVDCANTLCEFGGLYQALCQALQAFGATCQSQGLKPPLWRNSSFCPLECPAYSSYTNCLPSCSPSCWDLDGRCEGAKVPSACAEGCICQPGYVLSEDKCVPRSQCGCKDAHGGSIPLGKSWVSSGCTEKCVCTGGAIQCGDFRCPSGSHCQLTSDNSNSNCVSDKSEQCSVYGDPRYLTFDGFSYRLQGRMTYVLIKTVDVLPEGVEPLLVEGRNKMDPPRSSIFLQEVITTVYGYKVQLQAGLELVVNNQKMAVPYRPNEHLRVTLWGQRLYLVTDFELVVSFGGRKNAVISLPSMYEGLVSGLCGNYDKNRKNDMMLPSGALTQNLNTFGNSWEVKTEDALLRFPRAIPAEEEGQGAELGLRTGLQVSECSPEQLASNSTQACRVLADPQGPFAACHQTVAPEPFQEHCVLDLCSAQDPREQEELRCQVLSGHGVSSRYHISELYDTLPSILCQPGRPRGLRGPLRGRLRQHPRLCLQWHPEPPLADCGCTSNGIYYQLGSSFLTEDCSQRCTCASSRILLCEPFSCRAGEVCTLGNHTQGCFPESPCLQNPCQNDGQCREQGATFTCECEVGYGGGLCMEPRDAPPPRKPASNLVGVLLGLLVPVVVVLLAVTRECIYRTRRKREKTQEGDRLARLVDTDTVLDCAC</sequence>
<gene>
    <name type="primary">ZAN</name>
</gene>
<organism>
    <name type="scientific">Homo sapiens</name>
    <name type="common">Human</name>
    <dbReference type="NCBI Taxonomy" id="9606"/>
    <lineage>
        <taxon>Eukaryota</taxon>
        <taxon>Metazoa</taxon>
        <taxon>Chordata</taxon>
        <taxon>Craniata</taxon>
        <taxon>Vertebrata</taxon>
        <taxon>Euteleostomi</taxon>
        <taxon>Mammalia</taxon>
        <taxon>Eutheria</taxon>
        <taxon>Euarchontoglires</taxon>
        <taxon>Primates</taxon>
        <taxon>Haplorrhini</taxon>
        <taxon>Catarrhini</taxon>
        <taxon>Hominidae</taxon>
        <taxon>Homo</taxon>
    </lineage>
</organism>
<accession>Q9Y493</accession>
<accession>A0A087WU49</accession>
<accession>A0FKC8</accession>
<accession>D6W5W4</accession>
<accession>O00218</accession>
<accession>Q96L85</accession>
<accession>Q96L86</accession>
<accession>Q96L87</accession>
<accession>Q96L88</accession>
<accession>Q96L89</accession>
<accession>Q96L90</accession>
<accession>Q9BXN9</accession>
<accession>Q9BZ83</accession>
<accession>Q9BZ84</accession>
<accession>Q9BZ85</accession>
<accession>Q9BZ86</accession>
<accession>Q9BZ87</accession>
<accession>Q9BZ88</accession>
<evidence type="ECO:0000250" key="1"/>
<evidence type="ECO:0000255" key="2"/>
<evidence type="ECO:0000255" key="3">
    <source>
        <dbReference type="PROSITE-ProRule" id="PRU00076"/>
    </source>
</evidence>
<evidence type="ECO:0000255" key="4">
    <source>
        <dbReference type="PROSITE-ProRule" id="PRU00128"/>
    </source>
</evidence>
<evidence type="ECO:0000255" key="5">
    <source>
        <dbReference type="PROSITE-ProRule" id="PRU00580"/>
    </source>
</evidence>
<evidence type="ECO:0000256" key="6">
    <source>
        <dbReference type="SAM" id="MobiDB-lite"/>
    </source>
</evidence>
<evidence type="ECO:0000269" key="7">
    <source>
    </source>
</evidence>
<evidence type="ECO:0000269" key="8">
    <source>
    </source>
</evidence>
<evidence type="ECO:0000269" key="9">
    <source>
    </source>
</evidence>
<evidence type="ECO:0000303" key="10">
    <source>
    </source>
</evidence>
<evidence type="ECO:0000303" key="11">
    <source ref="1"/>
</evidence>
<evidence type="ECO:0000305" key="12"/>
<reference key="1">
    <citation type="submission" date="2001-01" db="EMBL/GenBank/DDBJ databases">
        <title>Multiple intra-species variants of human zonadhesin.</title>
        <authorList>
            <person name="Cheung T.L."/>
            <person name="Wassler M.J."/>
            <person name="Cornwall G.A."/>
            <person name="Hardy D.M."/>
        </authorList>
    </citation>
    <scope>NUCLEOTIDE SEQUENCE [MRNA] (ISOFORMS 1; 2; 3; 4; 5 AND 6)</scope>
    <source>
        <tissue>Testis</tissue>
    </source>
</reference>
<reference key="2">
    <citation type="journal article" date="2006" name="Am. J. Hum. Genet.">
        <title>Molecular population genetics of the gene encoding the human fertilization protein zonadhesin reveals rapid adaptive evolution.</title>
        <authorList>
            <person name="Gasper J."/>
            <person name="Swanson W.J."/>
        </authorList>
    </citation>
    <scope>NUCLEOTIDE SEQUENCE [GENOMIC DNA]</scope>
    <scope>VARIANTS HIS-430; LEU-1969; THR-2035 AND PRO-2111</scope>
</reference>
<reference key="3">
    <citation type="journal article" date="2003" name="Nature">
        <title>The DNA sequence of human chromosome 7.</title>
        <authorList>
            <person name="Hillier L.W."/>
            <person name="Fulton R.S."/>
            <person name="Fulton L.A."/>
            <person name="Graves T.A."/>
            <person name="Pepin K.H."/>
            <person name="Wagner-McPherson C."/>
            <person name="Layman D."/>
            <person name="Maas J."/>
            <person name="Jaeger S."/>
            <person name="Walker R."/>
            <person name="Wylie K."/>
            <person name="Sekhon M."/>
            <person name="Becker M.C."/>
            <person name="O'Laughlin M.D."/>
            <person name="Schaller M.E."/>
            <person name="Fewell G.A."/>
            <person name="Delehaunty K.D."/>
            <person name="Miner T.L."/>
            <person name="Nash W.E."/>
            <person name="Cordes M."/>
            <person name="Du H."/>
            <person name="Sun H."/>
            <person name="Edwards J."/>
            <person name="Bradshaw-Cordum H."/>
            <person name="Ali J."/>
            <person name="Andrews S."/>
            <person name="Isak A."/>
            <person name="Vanbrunt A."/>
            <person name="Nguyen C."/>
            <person name="Du F."/>
            <person name="Lamar B."/>
            <person name="Courtney L."/>
            <person name="Kalicki J."/>
            <person name="Ozersky P."/>
            <person name="Bielicki L."/>
            <person name="Scott K."/>
            <person name="Holmes A."/>
            <person name="Harkins R."/>
            <person name="Harris A."/>
            <person name="Strong C.M."/>
            <person name="Hou S."/>
            <person name="Tomlinson C."/>
            <person name="Dauphin-Kohlberg S."/>
            <person name="Kozlowicz-Reilly A."/>
            <person name="Leonard S."/>
            <person name="Rohlfing T."/>
            <person name="Rock S.M."/>
            <person name="Tin-Wollam A.-M."/>
            <person name="Abbott A."/>
            <person name="Minx P."/>
            <person name="Maupin R."/>
            <person name="Strowmatt C."/>
            <person name="Latreille P."/>
            <person name="Miller N."/>
            <person name="Johnson D."/>
            <person name="Murray J."/>
            <person name="Woessner J.P."/>
            <person name="Wendl M.C."/>
            <person name="Yang S.-P."/>
            <person name="Schultz B.R."/>
            <person name="Wallis J.W."/>
            <person name="Spieth J."/>
            <person name="Bieri T.A."/>
            <person name="Nelson J.O."/>
            <person name="Berkowicz N."/>
            <person name="Wohldmann P.E."/>
            <person name="Cook L.L."/>
            <person name="Hickenbotham M.T."/>
            <person name="Eldred J."/>
            <person name="Williams D."/>
            <person name="Bedell J.A."/>
            <person name="Mardis E.R."/>
            <person name="Clifton S.W."/>
            <person name="Chissoe S.L."/>
            <person name="Marra M.A."/>
            <person name="Raymond C."/>
            <person name="Haugen E."/>
            <person name="Gillett W."/>
            <person name="Zhou Y."/>
            <person name="James R."/>
            <person name="Phelps K."/>
            <person name="Iadanoto S."/>
            <person name="Bubb K."/>
            <person name="Simms E."/>
            <person name="Levy R."/>
            <person name="Clendenning J."/>
            <person name="Kaul R."/>
            <person name="Kent W.J."/>
            <person name="Furey T.S."/>
            <person name="Baertsch R.A."/>
            <person name="Brent M.R."/>
            <person name="Keibler E."/>
            <person name="Flicek P."/>
            <person name="Bork P."/>
            <person name="Suyama M."/>
            <person name="Bailey J.A."/>
            <person name="Portnoy M.E."/>
            <person name="Torrents D."/>
            <person name="Chinwalla A.T."/>
            <person name="Gish W.R."/>
            <person name="Eddy S.R."/>
            <person name="McPherson J.D."/>
            <person name="Olson M.V."/>
            <person name="Eichler E.E."/>
            <person name="Green E.D."/>
            <person name="Waterston R.H."/>
            <person name="Wilson R.K."/>
        </authorList>
    </citation>
    <scope>NUCLEOTIDE SEQUENCE [LARGE SCALE GENOMIC DNA]</scope>
</reference>
<reference key="4">
    <citation type="submission" date="2005-07" db="EMBL/GenBank/DDBJ databases">
        <authorList>
            <person name="Mural R.J."/>
            <person name="Istrail S."/>
            <person name="Sutton G.G."/>
            <person name="Florea L."/>
            <person name="Halpern A.L."/>
            <person name="Mobarry C.M."/>
            <person name="Lippert R."/>
            <person name="Walenz B."/>
            <person name="Shatkay H."/>
            <person name="Dew I."/>
            <person name="Miller J.R."/>
            <person name="Flanigan M.J."/>
            <person name="Edwards N.J."/>
            <person name="Bolanos R."/>
            <person name="Fasulo D."/>
            <person name="Halldorsson B.V."/>
            <person name="Hannenhalli S."/>
            <person name="Turner R."/>
            <person name="Yooseph S."/>
            <person name="Lu F."/>
            <person name="Nusskern D.R."/>
            <person name="Shue B.C."/>
            <person name="Zheng X.H."/>
            <person name="Zhong F."/>
            <person name="Delcher A.L."/>
            <person name="Huson D.H."/>
            <person name="Kravitz S.A."/>
            <person name="Mouchard L."/>
            <person name="Reinert K."/>
            <person name="Remington K.A."/>
            <person name="Clark A.G."/>
            <person name="Waterman M.S."/>
            <person name="Eichler E.E."/>
            <person name="Adams M.D."/>
            <person name="Hunkapiller M.W."/>
            <person name="Myers E.W."/>
            <person name="Venter J.C."/>
        </authorList>
    </citation>
    <scope>NUCLEOTIDE SEQUENCE [LARGE SCALE GENOMIC DNA]</scope>
</reference>
<reference key="5">
    <citation type="journal article" date="1998" name="Genome Res.">
        <title>Large-scale sequencing of two regions in human chromosome 7q22: analysis of 650 kb of genomic sequence around the EPO and CUTL1 loci reveals 17 genes.</title>
        <authorList>
            <person name="Gloeckner G."/>
            <person name="Scherer S."/>
            <person name="Schattevoy R."/>
            <person name="Boright A.P."/>
            <person name="Weber J."/>
            <person name="Tsui L.-C."/>
            <person name="Rosenthal A."/>
        </authorList>
    </citation>
    <scope>PARTIAL NUCLEOTIDE SEQUENCE [GENOMIC DNA]</scope>
    <scope>VARIANTS HIS-430; LEU-1969; MET-1995; THR-2035 AND PRO-2111</scope>
</reference>
<reference key="6">
    <citation type="journal article" date="2001" name="Nucleic Acids Res.">
        <title>Comparative analysis of the gene-dense ACHE/TFR2 region on human chromosome 7q22 with the orthologous region on mouse chromosome 5.</title>
        <authorList>
            <person name="Wilson M.D."/>
            <person name="Riemer C."/>
            <person name="Martindale D.W."/>
            <person name="Schnupf P."/>
            <person name="Boright A.P."/>
            <person name="Cheung T.L."/>
            <person name="Hardy D.M."/>
            <person name="Schwartz S."/>
            <person name="Scherer S.W."/>
            <person name="Tsui L.-C."/>
            <person name="Miller W."/>
            <person name="Koop B.F."/>
        </authorList>
    </citation>
    <scope>NUCLEOTIDE SEQUENCE [GENOMIC DNA] OF 1810-2812 (ISOFORM 1)</scope>
    <scope>VARIANTS LEU-1969; THR-2035 AND PRO-2111</scope>
</reference>
<reference key="7">
    <citation type="journal article" date="1997" name="Genomics">
        <title>Chromosome localization of the mouse zonadhesin gene and the human zonadhesin gene (ZAN).</title>
        <authorList>
            <person name="Gao Z."/>
            <person name="Harumi T."/>
            <person name="Garbers D.L."/>
        </authorList>
    </citation>
    <scope>NUCLEOTIDE SEQUENCE [MRNA] OF 2375-2683 (ISOFORM 7)</scope>
    <source>
        <tissue>Testis</tissue>
    </source>
</reference>
<reference key="8">
    <citation type="journal article" date="2004" name="Genome Biol.">
        <title>An unappreciated role for RNA surveillance.</title>
        <authorList>
            <person name="Hillman R.T."/>
            <person name="Green R.E."/>
            <person name="Brenner S.E."/>
        </authorList>
    </citation>
    <scope>SPLICE ISOFORM(S) THAT ARE POTENTIAL NMD TARGET(S)</scope>
</reference>
<keyword id="KW-0025">Alternative splicing</keyword>
<keyword id="KW-0130">Cell adhesion</keyword>
<keyword id="KW-1003">Cell membrane</keyword>
<keyword id="KW-1015">Disulfide bond</keyword>
<keyword id="KW-0245">EGF-like domain</keyword>
<keyword id="KW-0325">Glycoprotein</keyword>
<keyword id="KW-0472">Membrane</keyword>
<keyword id="KW-1185">Reference proteome</keyword>
<keyword id="KW-0677">Repeat</keyword>
<keyword id="KW-0732">Signal</keyword>
<keyword id="KW-0812">Transmembrane</keyword>
<keyword id="KW-1133">Transmembrane helix</keyword>
<comment type="function">
    <text>Binds in a species-specific manner to the zona pellucida of the egg. May be involved in gamete recognition and/or signaling.</text>
</comment>
<comment type="subunit">
    <text>Probably forms covalent oligomers.</text>
</comment>
<comment type="subcellular location">
    <subcellularLocation>
        <location>Cell membrane</location>
        <topology>Single-pass type I membrane protein</topology>
    </subcellularLocation>
    <text evidence="1">Exclusively on the apical region of the sperm head.</text>
</comment>
<comment type="alternative products">
    <event type="alternative splicing"/>
    <isoform>
        <id>Q9Y493-1</id>
        <name>3</name>
        <sequence type="displayed"/>
    </isoform>
    <isoform>
        <id>Q9Y493-2</id>
        <name>1</name>
        <sequence type="described" ref="VSP_001430 VSP_001431"/>
    </isoform>
    <isoform>
        <id>Q9Y493-3</id>
        <name>2</name>
        <sequence type="described" ref="VSP_001428 VSP_001429"/>
    </isoform>
    <isoform>
        <id>Q9Y493-4</id>
        <name>4</name>
        <sequence type="described" ref="VSP_001424 VSP_001425"/>
    </isoform>
    <isoform>
        <id>Q9Y493-5</id>
        <name>5</name>
        <sequence type="described" ref="VSP_001420 VSP_001421"/>
    </isoform>
    <isoform>
        <id>Q9Y493-6</id>
        <name>6</name>
        <sequence type="described" ref="VSP_001422 VSP_001423"/>
    </isoform>
    <isoform>
        <id>Q9Y493-7</id>
        <name>7</name>
        <sequence type="described" ref="VSP_001426 VSP_001427"/>
    </isoform>
</comment>
<comment type="tissue specificity">
    <text>In testis, primarily in haploid spermatids.</text>
</comment>
<comment type="domain">
    <text>The MAM domains probably mediate sperm adhesion to the zona pellucida.</text>
</comment>
<comment type="domain">
    <text>During sperm migration through the reproductive tracts, the mucin-like domain might inhibit inappropriate trapping of spermatozoa or promoting adhesion to the oviductal isthmus.</text>
</comment>
<comment type="domain">
    <text evidence="1">The VWFD domain 2 may mediate covalent oligomerization.</text>
</comment>
<comment type="miscellaneous">
    <molecule>Isoform 1</molecule>
    <text evidence="12">May be produced at very low levels due to a premature stop codon in the mRNA, leading to nonsense-mediated mRNA decay.</text>
</comment>
<comment type="miscellaneous">
    <molecule>Isoform 2</molecule>
    <text evidence="12">May be produced at very low levels due to a premature stop codon in the mRNA, leading to nonsense-mediated mRNA decay.</text>
</comment>
<comment type="miscellaneous">
    <molecule>Isoform 4</molecule>
    <text evidence="12">May be produced at very low levels due to a premature stop codon in the mRNA, leading to nonsense-mediated mRNA decay.</text>
</comment>
<comment type="miscellaneous">
    <molecule>Isoform 5</molecule>
    <text evidence="12">May be produced at very low levels due to a premature stop codon in the mRNA, leading to nonsense-mediated mRNA decay.</text>
</comment>
<comment type="sequence caution" evidence="12">
    <conflict type="erroneous gene model prediction">
        <sequence resource="EMBL-CDS" id="AAC78790"/>
    </conflict>
</comment>
<comment type="sequence caution" evidence="12">
    <conflict type="erroneous gene model prediction">
        <sequence resource="EMBL-CDS" id="EAW76487"/>
    </conflict>
</comment>
<comment type="sequence caution" evidence="12">
    <conflict type="erroneous gene model prediction">
        <sequence resource="EMBL-CDS" id="EAW76488"/>
    </conflict>
</comment>
<comment type="sequence caution" evidence="12">
    <conflict type="erroneous gene model prediction">
        <sequence resource="EMBL-CDS" id="EAW76489"/>
    </conflict>
</comment>
<comment type="sequence caution" evidence="12">
    <conflict type="erroneous gene model prediction">
        <sequence resource="EMBL-CDS" id="EAW76490"/>
    </conflict>
</comment>
<comment type="sequence caution" evidence="12">
    <conflict type="erroneous gene model prediction">
        <sequence resource="EMBL-CDS" id="EAW76491"/>
    </conflict>
</comment>
<comment type="sequence caution" evidence="12">
    <conflict type="erroneous gene model prediction">
        <sequence resource="EMBL-CDS" id="EAW76492"/>
    </conflict>
</comment>
<feature type="signal peptide" evidence="2">
    <location>
        <begin position="1"/>
        <end position="17"/>
    </location>
</feature>
<feature type="chain" id="PRO_0000007783" description="Zonadhesin">
    <location>
        <begin position="18"/>
        <end position="2812"/>
    </location>
</feature>
<feature type="topological domain" description="Extracellular" evidence="2">
    <location>
        <begin position="18"/>
        <end position="2757"/>
    </location>
</feature>
<feature type="transmembrane region" description="Helical" evidence="2">
    <location>
        <begin position="2758"/>
        <end position="2778"/>
    </location>
</feature>
<feature type="topological domain" description="Cytoplasmic" evidence="2">
    <location>
        <begin position="2779"/>
        <end position="2812"/>
    </location>
</feature>
<feature type="domain" description="MAM 1" evidence="4">
    <location>
        <begin position="39"/>
        <end position="204"/>
    </location>
</feature>
<feature type="domain" description="MAM 2" evidence="4">
    <location>
        <begin position="209"/>
        <end position="368"/>
    </location>
</feature>
<feature type="domain" description="MAM 3" evidence="4">
    <location>
        <begin position="371"/>
        <end position="536"/>
    </location>
</feature>
<feature type="domain" description="TIL 1">
    <location>
        <begin position="1044"/>
        <end position="1093"/>
    </location>
</feature>
<feature type="domain" description="VWFC 1">
    <location>
        <begin position="1103"/>
        <end position="1148"/>
    </location>
</feature>
<feature type="domain" description="VWFD 1" evidence="5">
    <location>
        <begin position="1154"/>
        <end position="1331"/>
    </location>
</feature>
<feature type="domain" description="TIL 2">
    <location>
        <begin position="1426"/>
        <end position="1479"/>
    </location>
</feature>
<feature type="domain" description="VWFC 2">
    <location>
        <begin position="1480"/>
        <end position="1535"/>
    </location>
</feature>
<feature type="domain" description="VWFD 2" evidence="5">
    <location>
        <begin position="1540"/>
        <end position="1720"/>
    </location>
</feature>
<feature type="domain" description="TIL 3">
    <location>
        <begin position="1812"/>
        <end position="1867"/>
    </location>
</feature>
<feature type="domain" description="VWFC 3">
    <location>
        <begin position="1868"/>
        <end position="1924"/>
    </location>
</feature>
<feature type="domain" description="VWFD 3" evidence="5">
    <location>
        <begin position="1929"/>
        <end position="2108"/>
    </location>
</feature>
<feature type="domain" description="TIL 4">
    <location>
        <begin position="2211"/>
        <end position="2267"/>
    </location>
</feature>
<feature type="domain" description="VWFC 4">
    <location>
        <begin position="2268"/>
        <end position="2329"/>
    </location>
</feature>
<feature type="domain" description="VWFD 4" evidence="5">
    <location>
        <begin position="2329"/>
        <end position="2505"/>
    </location>
</feature>
<feature type="domain" description="VWFC 5">
    <location>
        <begin position="2652"/>
        <end position="2797"/>
    </location>
</feature>
<feature type="domain" description="EGF-like" evidence="3">
    <location>
        <begin position="2708"/>
        <end position="2744"/>
    </location>
</feature>
<feature type="region of interest" description="Disordered" evidence="6">
    <location>
        <begin position="61"/>
        <end position="84"/>
    </location>
</feature>
<feature type="region of interest" description="Disordered" evidence="6">
    <location>
        <begin position="545"/>
        <end position="884"/>
    </location>
</feature>
<feature type="region of interest" description="66 X heptapeptide repeats (approximate) (mucin-like domain)">
    <location>
        <begin position="573"/>
        <end position="1041"/>
    </location>
</feature>
<feature type="region of interest" description="Disordered" evidence="6">
    <location>
        <begin position="904"/>
        <end position="929"/>
    </location>
</feature>
<feature type="region of interest" description="Disordered" evidence="6">
    <location>
        <begin position="1302"/>
        <end position="1323"/>
    </location>
</feature>
<feature type="compositionally biased region" description="Low complexity" evidence="6">
    <location>
        <begin position="66"/>
        <end position="75"/>
    </location>
</feature>
<feature type="compositionally biased region" description="Low complexity" evidence="6">
    <location>
        <begin position="547"/>
        <end position="558"/>
    </location>
</feature>
<feature type="compositionally biased region" description="Polar residues" evidence="6">
    <location>
        <begin position="559"/>
        <end position="570"/>
    </location>
</feature>
<feature type="compositionally biased region" description="Low complexity" evidence="6">
    <location>
        <begin position="592"/>
        <end position="603"/>
    </location>
</feature>
<feature type="compositionally biased region" description="Low complexity" evidence="6">
    <location>
        <begin position="651"/>
        <end position="675"/>
    </location>
</feature>
<feature type="compositionally biased region" description="Low complexity" evidence="6">
    <location>
        <begin position="713"/>
        <end position="842"/>
    </location>
</feature>
<feature type="compositionally biased region" description="Low complexity" evidence="6">
    <location>
        <begin position="853"/>
        <end position="868"/>
    </location>
</feature>
<feature type="compositionally biased region" description="Low complexity" evidence="6">
    <location>
        <begin position="916"/>
        <end position="929"/>
    </location>
</feature>
<feature type="compositionally biased region" description="Basic and acidic residues" evidence="6">
    <location>
        <begin position="1302"/>
        <end position="1316"/>
    </location>
</feature>
<feature type="glycosylation site" description="N-linked (GlcNAc...) asparagine" evidence="2">
    <location>
        <position position="333"/>
    </location>
</feature>
<feature type="glycosylation site" description="N-linked (GlcNAc...) asparagine" evidence="2">
    <location>
        <position position="493"/>
    </location>
</feature>
<feature type="glycosylation site" description="N-linked (GlcNAc...) asparagine" evidence="2">
    <location>
        <position position="1112"/>
    </location>
</feature>
<feature type="glycosylation site" description="N-linked (GlcNAc...) asparagine" evidence="2">
    <location>
        <position position="1188"/>
    </location>
</feature>
<feature type="glycosylation site" description="N-linked (GlcNAc...) asparagine" evidence="2">
    <location>
        <position position="1685"/>
    </location>
</feature>
<feature type="glycosylation site" description="N-linked (GlcNAc...) asparagine" evidence="2">
    <location>
        <position position="1804"/>
    </location>
</feature>
<feature type="glycosylation site" description="N-linked (GlcNAc...) asparagine" evidence="2">
    <location>
        <position position="1900"/>
    </location>
</feature>
<feature type="glycosylation site" description="N-linked (GlcNAc...) asparagine" evidence="2">
    <location>
        <position position="1946"/>
    </location>
</feature>
<feature type="glycosylation site" description="N-linked (GlcNAc...) asparagine" evidence="2">
    <location>
        <position position="2203"/>
    </location>
</feature>
<feature type="glycosylation site" description="N-linked (GlcNAc...) asparagine" evidence="2">
    <location>
        <position position="2542"/>
    </location>
</feature>
<feature type="glycosylation site" description="N-linked (GlcNAc...) asparagine" evidence="2">
    <location>
        <position position="2701"/>
    </location>
</feature>
<feature type="disulfide bond" evidence="5">
    <location>
        <begin position="1156"/>
        <end position="1291"/>
    </location>
</feature>
<feature type="disulfide bond" evidence="5">
    <location>
        <begin position="1178"/>
        <end position="1330"/>
    </location>
</feature>
<feature type="disulfide bond" evidence="5">
    <location>
        <begin position="1542"/>
        <end position="1680"/>
    </location>
</feature>
<feature type="disulfide bond" evidence="5">
    <location>
        <begin position="1564"/>
        <end position="1719"/>
    </location>
</feature>
<feature type="disulfide bond" evidence="5">
    <location>
        <begin position="1931"/>
        <end position="2069"/>
    </location>
</feature>
<feature type="disulfide bond" evidence="5">
    <location>
        <begin position="1953"/>
        <end position="2107"/>
    </location>
</feature>
<feature type="disulfide bond" evidence="5">
    <location>
        <begin position="2331"/>
        <end position="2468"/>
    </location>
</feature>
<feature type="disulfide bond" evidence="1">
    <location>
        <begin position="2712"/>
        <end position="2723"/>
    </location>
</feature>
<feature type="disulfide bond" evidence="1">
    <location>
        <begin position="2717"/>
        <end position="2732"/>
    </location>
</feature>
<feature type="disulfide bond" evidence="1">
    <location>
        <begin position="2734"/>
        <end position="2743"/>
    </location>
</feature>
<feature type="splice variant" id="VSP_001430" description="In isoform 1." evidence="11">
    <original>HGVSSRYHISELYDTLPSILCQPGRPRGLRGPLRGRLRQHPRLCLQWHPEPPLADCGCTSNGIYYQLGSSFLTEDCSQRCTCASSRILLCEPFSCRAGEVCTLGNHTQGCFPESPCLQNPCQNDGQCR</original>
    <variation>YAILCQEAGAALAGWRDRTLCAMECPAGTIYQSCMTPCPASCANLADPGDCEGPCVEGCASIPGYAYSGTQSLPWLTVAAPAMASTTRSELAAGGPGEQRRQGEPDQGWNWNVSSWPFPFLAGQQLSD</variation>
    <location>
        <begin position="2597"/>
        <end position="2724"/>
    </location>
</feature>
<feature type="splice variant" id="VSP_001428" description="In isoform 2." evidence="11">
    <original>HGVSSRYHISELYDTLPSILCQPGRPRGLRGPLRGRLRQHPRLCLQWHPEPPLADCGCTSNGIYYQLGSSFLTEDCSQRCTCASSRILLCEPF</original>
    <variation>YAILCQEAGAALAGWRDRTLCAMECPAGTIYQSCMTPCPASCANLADPGDCEGPCVEGCASIPGYAYSGTQSLPWLTVAAPAMASTTSWAAAF</variation>
    <location>
        <begin position="2597"/>
        <end position="2689"/>
    </location>
</feature>
<feature type="splice variant" id="VSP_001426" description="In isoform 7." evidence="10">
    <original>HGVSSRYHISELYDTLPSILCQPGRPRGLRGPLRGRLRQH</original>
    <variation>YAILCQEAGAALAGWRDRTLCAMECPAGTIYQSCMTPCPASCANLADPGDCEGPCVEGCAD</variation>
    <location>
        <begin position="2597"/>
        <end position="2636"/>
    </location>
</feature>
<feature type="splice variant" id="VSP_001424" description="In isoform 4." evidence="11">
    <original>HGVSSRYHISELYDTLPSILCQPGRPRG</original>
    <variation>YAILCQEAGAALAGWRDRTLCAGQQLSD</variation>
    <location>
        <begin position="2597"/>
        <end position="2624"/>
    </location>
</feature>
<feature type="splice variant" id="VSP_001422" description="In isoform 6." evidence="11">
    <original>HGVSSRYHISELYDTLPSILC</original>
    <variation>YAILCQEAGAALAGWRDRTLC</variation>
    <location>
        <begin position="2597"/>
        <end position="2617"/>
    </location>
</feature>
<feature type="splice variant" id="VSP_001420" description="In isoform 5." evidence="11">
    <original>HGVSS</original>
    <variation>WAAAF</variation>
    <location>
        <begin position="2597"/>
        <end position="2601"/>
    </location>
</feature>
<feature type="splice variant" id="VSP_001421" description="In isoform 5." evidence="11">
    <location>
        <begin position="2602"/>
        <end position="2812"/>
    </location>
</feature>
<feature type="splice variant" id="VSP_001423" description="In isoform 6." evidence="11">
    <location>
        <begin position="2618"/>
        <end position="2708"/>
    </location>
</feature>
<feature type="splice variant" id="VSP_001425" description="In isoform 4." evidence="11">
    <location>
        <begin position="2625"/>
        <end position="2812"/>
    </location>
</feature>
<feature type="splice variant" id="VSP_001427" description="In isoform 7." evidence="10">
    <original>LGSS</original>
    <variation>VRAGSRRPWGAEAPRRARPGMELERLLLALPFLAGQQ</variation>
    <location>
        <begin position="2663"/>
        <end position="2666"/>
    </location>
</feature>
<feature type="splice variant" id="VSP_001429" description="In isoform 2." evidence="11">
    <location>
        <begin position="2690"/>
        <end position="2812"/>
    </location>
</feature>
<feature type="splice variant" id="VSP_001431" description="In isoform 1." evidence="11">
    <location>
        <begin position="2725"/>
        <end position="2812"/>
    </location>
</feature>
<feature type="sequence variant" id="VAR_064584" description="In dbSNP:rs12673246.">
    <original>L</original>
    <variation>F</variation>
    <location>
        <position position="16"/>
    </location>
</feature>
<feature type="sequence variant" id="VAR_061162" description="In dbSNP:rs34828430.">
    <original>G</original>
    <variation>A</variation>
    <location>
        <position position="113"/>
    </location>
</feature>
<feature type="sequence variant" id="VAR_055785" description="In dbSNP:rs17162408.">
    <original>G</original>
    <variation>S</variation>
    <location>
        <position position="412"/>
    </location>
</feature>
<feature type="sequence variant" id="VAR_064585" description="In dbSNP:rs221833." evidence="8 9">
    <original>Q</original>
    <variation>H</variation>
    <location>
        <position position="430"/>
    </location>
</feature>
<feature type="sequence variant" id="VAR_055786" description="In dbSNP:rs13241461.">
    <original>S</original>
    <variation>T</variation>
    <location>
        <position position="690"/>
    </location>
</feature>
<feature type="sequence variant" id="VAR_055787" description="In dbSNP:rs6942733.">
    <original>L</original>
    <variation>R</variation>
    <location>
        <position position="1012"/>
    </location>
</feature>
<feature type="sequence variant" id="VAR_055788" description="In dbSNP:rs221823.">
    <original>F</original>
    <variation>C</variation>
    <location>
        <position position="1096"/>
    </location>
</feature>
<feature type="sequence variant" id="VAR_055789" description="In dbSNP:rs2293767.">
    <original>A</original>
    <variation>T</variation>
    <location>
        <position position="1375"/>
    </location>
</feature>
<feature type="sequence variant" id="VAR_055790" description="In dbSNP:rs10953303.">
    <original>G</original>
    <variation>C</variation>
    <location>
        <position position="1674"/>
    </location>
</feature>
<feature type="sequence variant" id="VAR_055791" description="In dbSNP:rs10247980.">
    <original>L</original>
    <variation>P</variation>
    <location>
        <position position="1698"/>
    </location>
</feature>
<feature type="sequence variant" id="VAR_055792" description="In dbSNP:rs17147735.">
    <original>C</original>
    <variation>R</variation>
    <location>
        <position position="1742"/>
    </location>
</feature>
<feature type="sequence variant" id="VAR_055793" description="In dbSNP:rs314298.">
    <original>P</original>
    <variation>S</variation>
    <location>
        <position position="1878"/>
    </location>
</feature>
<feature type="sequence variant" id="VAR_055794" description="In dbSNP:rs12673041.">
    <original>C</original>
    <variation>Y</variation>
    <location>
        <position position="1903"/>
    </location>
</feature>
<feature type="sequence variant" id="VAR_064586" description="Requires 2 nucleotide substitutions; dbSNP:rs314299.">
    <original>H</original>
    <variation>C</variation>
    <location>
        <position position="1922"/>
    </location>
</feature>
<feature type="sequence variant" id="VAR_064587" description="In dbSNP:rs542137." evidence="7 8 9">
    <original>F</original>
    <variation>L</variation>
    <location>
        <position position="1969"/>
    </location>
</feature>
<feature type="sequence variant" id="VAR_059278" description="In dbSNP:rs541275." evidence="9">
    <original>I</original>
    <variation>M</variation>
    <location>
        <position position="1995"/>
    </location>
</feature>
<feature type="sequence variant" id="VAR_064588" description="In dbSNP:rs539445." evidence="7 8 9">
    <original>S</original>
    <variation>T</variation>
    <location>
        <position position="2035"/>
    </location>
</feature>
<feature type="sequence variant" id="VAR_059279" description="In dbSNP:rs314300.">
    <original>N</original>
    <variation>S</variation>
    <location>
        <position position="2073"/>
    </location>
</feature>
<feature type="sequence variant" id="VAR_064589" description="In dbSNP:rs531503." evidence="7 8 9">
    <original>L</original>
    <variation>P</variation>
    <location>
        <position position="2111"/>
    </location>
</feature>
<feature type="sequence variant" id="VAR_061163" description="In dbSNP:rs60783739.">
    <original>Y</original>
    <variation>S</variation>
    <location>
        <position position="2334"/>
    </location>
</feature>
<feature type="sequence variant" id="VAR_061164" description="In dbSNP:rs59541653.">
    <original>L</original>
    <variation>F</variation>
    <location>
        <position position="2349"/>
    </location>
</feature>
<feature type="sequence variant" id="VAR_059280" description="In dbSNP:rs3847059.">
    <original>T</original>
    <variation>M</variation>
    <location>
        <position position="2527"/>
    </location>
</feature>
<feature type="sequence variant" id="VAR_059281" description="In dbSNP:rs314339.">
    <original>W</original>
    <variation>R</variation>
    <location>
        <position position="2643"/>
    </location>
</feature>
<feature type="sequence conflict" description="In Ref. 1; AAK01431/AAK01432/AAK01433/AAK01434/AAK01435/AAK01436 and 4; EAW76487/EAW76488/EAW76489/EAW76490/EAW76491/EAW76492." ref="1 4">
    <original>H</original>
    <variation>R</variation>
    <location>
        <position position="1922"/>
    </location>
</feature>
<feature type="sequence conflict" description="In Ref. 2; AAL04410/AAL04411/AAL04412/AAL04413/AAL04414/AAL04415/ABJ98522, 6; AAK21011 and 7; AAC51208." evidence="12" ref="2 6 7">
    <original>W</original>
    <variation>R</variation>
    <location>
        <position position="2430"/>
    </location>
</feature>
<feature type="sequence conflict" description="In Ref. 7; AAC51208." evidence="12" ref="7">
    <original>G</original>
    <variation>A</variation>
    <location>
        <position position="2555"/>
    </location>
</feature>
<feature type="sequence conflict" description="In Ref. 7; AAC51208." evidence="12" ref="7">
    <original>A</original>
    <variation>P</variation>
    <location>
        <position position="2565"/>
    </location>
</feature>
<feature type="sequence conflict" description="In Ref. 1; AAK01433." evidence="12" ref="1">
    <original>G</original>
    <variation>A</variation>
    <location>
        <position position="2761"/>
    </location>
</feature>
<dbReference type="EMBL" id="AF332975">
    <property type="protein sequence ID" value="AAK01431.1"/>
    <property type="molecule type" value="mRNA"/>
</dbReference>
<dbReference type="EMBL" id="AF332976">
    <property type="protein sequence ID" value="AAK01432.1"/>
    <property type="molecule type" value="mRNA"/>
</dbReference>
<dbReference type="EMBL" id="AF332977">
    <property type="protein sequence ID" value="AAK01433.1"/>
    <property type="molecule type" value="mRNA"/>
</dbReference>
<dbReference type="EMBL" id="AF332978">
    <property type="protein sequence ID" value="AAK01434.1"/>
    <property type="molecule type" value="mRNA"/>
</dbReference>
<dbReference type="EMBL" id="AF332979">
    <property type="protein sequence ID" value="AAK01435.1"/>
    <property type="molecule type" value="mRNA"/>
</dbReference>
<dbReference type="EMBL" id="AF332980">
    <property type="protein sequence ID" value="AAK01436.1"/>
    <property type="molecule type" value="mRNA"/>
</dbReference>
<dbReference type="EMBL" id="EF025894">
    <property type="protein sequence ID" value="ABJ98522.1"/>
    <property type="molecule type" value="Genomic_DNA"/>
</dbReference>
<dbReference type="EMBL" id="AY046055">
    <property type="protein sequence ID" value="AAL04410.1"/>
    <property type="molecule type" value="Genomic_DNA"/>
</dbReference>
<dbReference type="EMBL" id="AY046055">
    <property type="protein sequence ID" value="AAL04411.1"/>
    <property type="molecule type" value="Genomic_DNA"/>
</dbReference>
<dbReference type="EMBL" id="AY046055">
    <property type="protein sequence ID" value="AAL04412.1"/>
    <property type="molecule type" value="Genomic_DNA"/>
</dbReference>
<dbReference type="EMBL" id="AY046055">
    <property type="protein sequence ID" value="AAL04413.1"/>
    <property type="molecule type" value="Genomic_DNA"/>
</dbReference>
<dbReference type="EMBL" id="AY046055">
    <property type="protein sequence ID" value="AAL04414.1"/>
    <property type="molecule type" value="Genomic_DNA"/>
</dbReference>
<dbReference type="EMBL" id="AY046055">
    <property type="protein sequence ID" value="AAL04415.1"/>
    <property type="molecule type" value="Genomic_DNA"/>
</dbReference>
<dbReference type="EMBL" id="AC009488">
    <property type="status" value="NOT_ANNOTATED_CDS"/>
    <property type="molecule type" value="Genomic_DNA"/>
</dbReference>
<dbReference type="EMBL" id="AC011895">
    <property type="status" value="NOT_ANNOTATED_CDS"/>
    <property type="molecule type" value="Genomic_DNA"/>
</dbReference>
<dbReference type="EMBL" id="KF570250">
    <property type="status" value="NOT_ANNOTATED_CDS"/>
    <property type="molecule type" value="Genomic_DNA"/>
</dbReference>
<dbReference type="EMBL" id="CH471091">
    <property type="protein sequence ID" value="EAW76487.1"/>
    <property type="status" value="ALT_SEQ"/>
    <property type="molecule type" value="Genomic_DNA"/>
</dbReference>
<dbReference type="EMBL" id="CH471091">
    <property type="protein sequence ID" value="EAW76488.1"/>
    <property type="status" value="ALT_SEQ"/>
    <property type="molecule type" value="Genomic_DNA"/>
</dbReference>
<dbReference type="EMBL" id="CH471091">
    <property type="protein sequence ID" value="EAW76489.1"/>
    <property type="status" value="ALT_SEQ"/>
    <property type="molecule type" value="Genomic_DNA"/>
</dbReference>
<dbReference type="EMBL" id="CH471091">
    <property type="protein sequence ID" value="EAW76490.1"/>
    <property type="status" value="ALT_SEQ"/>
    <property type="molecule type" value="Genomic_DNA"/>
</dbReference>
<dbReference type="EMBL" id="CH471091">
    <property type="protein sequence ID" value="EAW76491.1"/>
    <property type="status" value="ALT_SEQ"/>
    <property type="molecule type" value="Genomic_DNA"/>
</dbReference>
<dbReference type="EMBL" id="CH471091">
    <property type="protein sequence ID" value="EAW76492.1"/>
    <property type="status" value="ALT_SEQ"/>
    <property type="molecule type" value="Genomic_DNA"/>
</dbReference>
<dbReference type="EMBL" id="AF053356">
    <property type="protein sequence ID" value="AAC78790.1"/>
    <property type="status" value="ALT_SEQ"/>
    <property type="molecule type" value="Genomic_DNA"/>
</dbReference>
<dbReference type="EMBL" id="AF312032">
    <property type="protein sequence ID" value="AAK21011.1"/>
    <property type="molecule type" value="Genomic_DNA"/>
</dbReference>
<dbReference type="EMBL" id="U83191">
    <property type="protein sequence ID" value="AAC51208.1"/>
    <property type="molecule type" value="mRNA"/>
</dbReference>
<dbReference type="CCDS" id="CCDS47663.2">
    <molecule id="Q9Y493-6"/>
</dbReference>
<dbReference type="CCDS" id="CCDS47664.2">
    <molecule id="Q9Y493-1"/>
</dbReference>
<dbReference type="RefSeq" id="NP_003377.2">
    <molecule id="Q9Y493-1"/>
    <property type="nucleotide sequence ID" value="NM_003386.3"/>
</dbReference>
<dbReference type="RefSeq" id="NP_775082.2">
    <molecule id="Q9Y493-6"/>
    <property type="nucleotide sequence ID" value="NM_173059.3"/>
</dbReference>
<dbReference type="SMR" id="Q9Y493"/>
<dbReference type="BioGRID" id="113294">
    <property type="interactions" value="2"/>
</dbReference>
<dbReference type="FunCoup" id="Q9Y493">
    <property type="interactions" value="3"/>
</dbReference>
<dbReference type="STRING" id="9606.ENSP00000480750"/>
<dbReference type="GlyCosmos" id="Q9Y493">
    <property type="glycosylation" value="11 sites, No reported glycans"/>
</dbReference>
<dbReference type="GlyGen" id="Q9Y493">
    <property type="glycosylation" value="12 sites, 1 O-linked glycan (1 site)"/>
</dbReference>
<dbReference type="iPTMnet" id="Q9Y493"/>
<dbReference type="PhosphoSitePlus" id="Q9Y493"/>
<dbReference type="BioMuta" id="ZAN"/>
<dbReference type="jPOST" id="Q9Y493"/>
<dbReference type="MassIVE" id="Q9Y493"/>
<dbReference type="PaxDb" id="9606-ENSP00000480750"/>
<dbReference type="PeptideAtlas" id="Q9Y493"/>
<dbReference type="ProteomicsDB" id="86132">
    <molecule id="Q9Y493-1"/>
</dbReference>
<dbReference type="ProteomicsDB" id="86133">
    <molecule id="Q9Y493-2"/>
</dbReference>
<dbReference type="ProteomicsDB" id="86134">
    <molecule id="Q9Y493-3"/>
</dbReference>
<dbReference type="ProteomicsDB" id="86135">
    <molecule id="Q9Y493-4"/>
</dbReference>
<dbReference type="ProteomicsDB" id="86136">
    <molecule id="Q9Y493-5"/>
</dbReference>
<dbReference type="ProteomicsDB" id="86137">
    <molecule id="Q9Y493-6"/>
</dbReference>
<dbReference type="ProteomicsDB" id="86138">
    <molecule id="Q9Y493-7"/>
</dbReference>
<dbReference type="Antibodypedia" id="73512">
    <property type="antibodies" value="45 antibodies from 8 providers"/>
</dbReference>
<dbReference type="DNASU" id="7455"/>
<dbReference type="Ensembl" id="ENST00000538115.5">
    <molecule id="Q9Y493-4"/>
    <property type="protein sequence ID" value="ENSP00000445091.2"/>
    <property type="gene ID" value="ENSG00000146839.19"/>
</dbReference>
<dbReference type="Ensembl" id="ENST00000542585.5">
    <molecule id="Q9Y493-3"/>
    <property type="protein sequence ID" value="ENSP00000444427.2"/>
    <property type="gene ID" value="ENSG00000146839.19"/>
</dbReference>
<dbReference type="Ensembl" id="ENST00000546213.5">
    <molecule id="Q9Y493-5"/>
    <property type="protein sequence ID" value="ENSP00000441117.2"/>
    <property type="gene ID" value="ENSG00000146839.19"/>
</dbReference>
<dbReference type="Ensembl" id="ENST00000546292.2">
    <molecule id="Q9Y493-6"/>
    <property type="protein sequence ID" value="ENSP00000445943.2"/>
    <property type="gene ID" value="ENSG00000146839.19"/>
</dbReference>
<dbReference type="Ensembl" id="ENST00000613979.5">
    <molecule id="Q9Y493-1"/>
    <property type="protein sequence ID" value="ENSP00000480750.1"/>
    <property type="gene ID" value="ENSG00000146839.19"/>
</dbReference>
<dbReference type="Ensembl" id="ENST00000618565.4">
    <molecule id="Q9Y493-1"/>
    <property type="protein sequence ID" value="ENSP00000478371.1"/>
    <property type="gene ID" value="ENSG00000146839.19"/>
</dbReference>
<dbReference type="Ensembl" id="ENST00000620596.4">
    <molecule id="Q9Y493-6"/>
    <property type="protein sequence ID" value="ENSP00000481742.1"/>
    <property type="gene ID" value="ENSG00000146839.19"/>
</dbReference>
<dbReference type="GeneID" id="7455"/>
<dbReference type="KEGG" id="hsa:7455"/>
<dbReference type="MANE-Select" id="ENST00000613979.5">
    <property type="protein sequence ID" value="ENSP00000480750.1"/>
    <property type="RefSeq nucleotide sequence ID" value="NM_003386.3"/>
    <property type="RefSeq protein sequence ID" value="NP_003377.2"/>
</dbReference>
<dbReference type="UCSC" id="uc032zzh.1">
    <property type="organism name" value="human"/>
</dbReference>
<dbReference type="AGR" id="HGNC:12857"/>
<dbReference type="CTD" id="7455"/>
<dbReference type="DisGeNET" id="7455"/>
<dbReference type="GeneCards" id="ZAN"/>
<dbReference type="HGNC" id="HGNC:12857">
    <property type="gene designation" value="ZAN"/>
</dbReference>
<dbReference type="HPA" id="ENSG00000146839">
    <property type="expression patterns" value="Not detected"/>
</dbReference>
<dbReference type="MIM" id="602372">
    <property type="type" value="gene"/>
</dbReference>
<dbReference type="neXtProt" id="NX_Q9Y493"/>
<dbReference type="OpenTargets" id="ENSG00000146839"/>
<dbReference type="PharmGKB" id="PA37446"/>
<dbReference type="VEuPathDB" id="HostDB:ENSG00000146839"/>
<dbReference type="eggNOG" id="KOG1216">
    <property type="taxonomic scope" value="Eukaryota"/>
</dbReference>
<dbReference type="GeneTree" id="ENSGT00940000156850"/>
<dbReference type="InParanoid" id="Q9Y493"/>
<dbReference type="OMA" id="QLCICEG"/>
<dbReference type="OrthoDB" id="5945029at2759"/>
<dbReference type="PAN-GO" id="Q9Y493">
    <property type="GO annotations" value="2 GO annotations based on evolutionary models"/>
</dbReference>
<dbReference type="PhylomeDB" id="Q9Y493"/>
<dbReference type="PathwayCommons" id="Q9Y493"/>
<dbReference type="BioGRID-ORCS" id="7455">
    <property type="hits" value="3 hits in 238 CRISPR screens"/>
</dbReference>
<dbReference type="ChiTaRS" id="ZAN">
    <property type="organism name" value="human"/>
</dbReference>
<dbReference type="GenomeRNAi" id="7455"/>
<dbReference type="Pharos" id="Q9Y493">
    <property type="development level" value="Tbio"/>
</dbReference>
<dbReference type="PRO" id="PR:Q9Y493"/>
<dbReference type="Proteomes" id="UP000005640">
    <property type="component" value="Chromosome 7"/>
</dbReference>
<dbReference type="RNAct" id="Q9Y493">
    <property type="molecule type" value="protein"/>
</dbReference>
<dbReference type="Bgee" id="ENSG00000146839">
    <property type="expression patterns" value="Expressed in left testis and 2 other cell types or tissues"/>
</dbReference>
<dbReference type="GO" id="GO:0031012">
    <property type="term" value="C:extracellular matrix"/>
    <property type="evidence" value="ECO:0000318"/>
    <property type="project" value="GO_Central"/>
</dbReference>
<dbReference type="GO" id="GO:0005615">
    <property type="term" value="C:extracellular space"/>
    <property type="evidence" value="ECO:0000318"/>
    <property type="project" value="GO_Central"/>
</dbReference>
<dbReference type="GO" id="GO:0005886">
    <property type="term" value="C:plasma membrane"/>
    <property type="evidence" value="ECO:0000303"/>
    <property type="project" value="UniProtKB"/>
</dbReference>
<dbReference type="GO" id="GO:0007339">
    <property type="term" value="P:binding of sperm to zona pellucida"/>
    <property type="evidence" value="ECO:0000303"/>
    <property type="project" value="UniProtKB"/>
</dbReference>
<dbReference type="GO" id="GO:0098609">
    <property type="term" value="P:cell-cell adhesion"/>
    <property type="evidence" value="ECO:0000303"/>
    <property type="project" value="UniProtKB"/>
</dbReference>
<dbReference type="CDD" id="cd00054">
    <property type="entry name" value="EGF_CA"/>
    <property type="match status" value="1"/>
</dbReference>
<dbReference type="CDD" id="cd06263">
    <property type="entry name" value="MAM"/>
    <property type="match status" value="3"/>
</dbReference>
<dbReference type="CDD" id="cd19941">
    <property type="entry name" value="TIL"/>
    <property type="match status" value="4"/>
</dbReference>
<dbReference type="FunFam" id="2.10.25.10:FF:000055">
    <property type="entry name" value="alpha-tectorin isoform X1"/>
    <property type="match status" value="3"/>
</dbReference>
<dbReference type="FunFam" id="2.60.120.200:FF:000128">
    <property type="entry name" value="enteropeptidase isoform X2"/>
    <property type="match status" value="2"/>
</dbReference>
<dbReference type="FunFam" id="2.60.120.200:FF:000365">
    <property type="entry name" value="Zonadhesin"/>
    <property type="match status" value="1"/>
</dbReference>
<dbReference type="Gene3D" id="2.60.120.200">
    <property type="match status" value="3"/>
</dbReference>
<dbReference type="Gene3D" id="2.10.25.10">
    <property type="entry name" value="Laminin"/>
    <property type="match status" value="5"/>
</dbReference>
<dbReference type="InterPro" id="IPR013320">
    <property type="entry name" value="ConA-like_dom_sf"/>
</dbReference>
<dbReference type="InterPro" id="IPR000742">
    <property type="entry name" value="EGF-like_dom"/>
</dbReference>
<dbReference type="InterPro" id="IPR000998">
    <property type="entry name" value="MAM_dom"/>
</dbReference>
<dbReference type="InterPro" id="IPR050780">
    <property type="entry name" value="Mucin_vWF_Thrombospondin_sf"/>
</dbReference>
<dbReference type="InterPro" id="IPR036084">
    <property type="entry name" value="Ser_inhib-like_sf"/>
</dbReference>
<dbReference type="InterPro" id="IPR002919">
    <property type="entry name" value="TIL_dom"/>
</dbReference>
<dbReference type="InterPro" id="IPR025615">
    <property type="entry name" value="TILa_dom"/>
</dbReference>
<dbReference type="InterPro" id="IPR014853">
    <property type="entry name" value="VWF/SSPO/ZAN-like_Cys-rich_dom"/>
</dbReference>
<dbReference type="InterPro" id="IPR001007">
    <property type="entry name" value="VWF_dom"/>
</dbReference>
<dbReference type="InterPro" id="IPR001846">
    <property type="entry name" value="VWF_type-D"/>
</dbReference>
<dbReference type="PANTHER" id="PTHR11339">
    <property type="entry name" value="EXTRACELLULAR MATRIX GLYCOPROTEIN RELATED"/>
    <property type="match status" value="1"/>
</dbReference>
<dbReference type="PANTHER" id="PTHR11339:SF374">
    <property type="entry name" value="ZONADHESIN"/>
    <property type="match status" value="1"/>
</dbReference>
<dbReference type="Pfam" id="PF08742">
    <property type="entry name" value="C8"/>
    <property type="match status" value="4"/>
</dbReference>
<dbReference type="Pfam" id="PF00629">
    <property type="entry name" value="MAM"/>
    <property type="match status" value="3"/>
</dbReference>
<dbReference type="Pfam" id="PF01826">
    <property type="entry name" value="TIL"/>
    <property type="match status" value="4"/>
</dbReference>
<dbReference type="Pfam" id="PF12714">
    <property type="entry name" value="TILa"/>
    <property type="match status" value="5"/>
</dbReference>
<dbReference type="Pfam" id="PF00094">
    <property type="entry name" value="VWD"/>
    <property type="match status" value="4"/>
</dbReference>
<dbReference type="SMART" id="SM00832">
    <property type="entry name" value="C8"/>
    <property type="match status" value="4"/>
</dbReference>
<dbReference type="SMART" id="SM00181">
    <property type="entry name" value="EGF"/>
    <property type="match status" value="4"/>
</dbReference>
<dbReference type="SMART" id="SM00137">
    <property type="entry name" value="MAM"/>
    <property type="match status" value="3"/>
</dbReference>
<dbReference type="SMART" id="SM00214">
    <property type="entry name" value="VWC"/>
    <property type="match status" value="4"/>
</dbReference>
<dbReference type="SMART" id="SM00215">
    <property type="entry name" value="VWC_out"/>
    <property type="match status" value="4"/>
</dbReference>
<dbReference type="SMART" id="SM00216">
    <property type="entry name" value="VWD"/>
    <property type="match status" value="4"/>
</dbReference>
<dbReference type="SUPFAM" id="SSF49899">
    <property type="entry name" value="Concanavalin A-like lectins/glucanases"/>
    <property type="match status" value="3"/>
</dbReference>
<dbReference type="SUPFAM" id="SSF57196">
    <property type="entry name" value="EGF/Laminin"/>
    <property type="match status" value="1"/>
</dbReference>
<dbReference type="SUPFAM" id="SSF57567">
    <property type="entry name" value="Serine protease inhibitors"/>
    <property type="match status" value="4"/>
</dbReference>
<dbReference type="PROSITE" id="PS00022">
    <property type="entry name" value="EGF_1"/>
    <property type="match status" value="1"/>
</dbReference>
<dbReference type="PROSITE" id="PS01186">
    <property type="entry name" value="EGF_2"/>
    <property type="match status" value="4"/>
</dbReference>
<dbReference type="PROSITE" id="PS50026">
    <property type="entry name" value="EGF_3"/>
    <property type="match status" value="1"/>
</dbReference>
<dbReference type="PROSITE" id="PS00740">
    <property type="entry name" value="MAM_1"/>
    <property type="match status" value="1"/>
</dbReference>
<dbReference type="PROSITE" id="PS50060">
    <property type="entry name" value="MAM_2"/>
    <property type="match status" value="3"/>
</dbReference>
<dbReference type="PROSITE" id="PS51233">
    <property type="entry name" value="VWFD"/>
    <property type="match status" value="4"/>
</dbReference>
<name>ZAN_HUMAN</name>
<proteinExistence type="evidence at transcript level"/>
<protein>
    <recommendedName>
        <fullName>Zonadhesin</fullName>
    </recommendedName>
</protein>